<proteinExistence type="evidence at transcript level"/>
<protein>
    <recommendedName>
        <fullName>Calcipressin-1</fullName>
    </recommendedName>
    <alternativeName>
        <fullName>Down syndrome critical region protein 1</fullName>
    </alternativeName>
    <alternativeName>
        <fullName>Regulator of calcineurin 1</fullName>
    </alternativeName>
</protein>
<evidence type="ECO:0000250" key="1">
    <source>
        <dbReference type="UniProtKB" id="P53805"/>
    </source>
</evidence>
<evidence type="ECO:0000250" key="2">
    <source>
        <dbReference type="UniProtKB" id="Q9JHG6"/>
    </source>
</evidence>
<evidence type="ECO:0000256" key="3">
    <source>
        <dbReference type="SAM" id="MobiDB-lite"/>
    </source>
</evidence>
<evidence type="ECO:0000305" key="4"/>
<sequence>MHFRNFNYSFSSLIACVANSEIFSESETRAKFESLFRTYDKDITFQYFKSFKRVRINFSNPLSAADARLQLHKTEFLGKEMKLYFAQTLHIGSSHLAPPNPDKQFLISPPASPPVGWKQVEDATPVINYDLLYAISKLGPGEKYELHAATDTTPSVVVHVCESDQENEEEDEMERMKRPKPKIIQTRRPEYTPIHLS</sequence>
<accession>Q6XXM7</accession>
<dbReference type="EMBL" id="AY205232">
    <property type="protein sequence ID" value="AAP38169.1"/>
    <property type="molecule type" value="mRNA"/>
</dbReference>
<dbReference type="RefSeq" id="NP_001009274.1">
    <property type="nucleotide sequence ID" value="NM_001009274.1"/>
</dbReference>
<dbReference type="SMR" id="Q6XXM7"/>
<dbReference type="STRING" id="9940.ENSOARP00000013574"/>
<dbReference type="PaxDb" id="9940-ENSOARP00000013574"/>
<dbReference type="Ensembl" id="ENSOART00180019841">
    <property type="protein sequence ID" value="ENSOARP00180010236"/>
    <property type="gene ID" value="ENSOARG00180012083"/>
</dbReference>
<dbReference type="Ensembl" id="ENSOART00185019012">
    <property type="protein sequence ID" value="ENSOARP00185009475"/>
    <property type="gene ID" value="ENSOARG00185011663"/>
</dbReference>
<dbReference type="Ensembl" id="ENSOART00215069355">
    <property type="protein sequence ID" value="ENSOARP00215037153"/>
    <property type="gene ID" value="ENSOARG00215041109"/>
</dbReference>
<dbReference type="Ensembl" id="ENSOART00220008026">
    <property type="protein sequence ID" value="ENSOARP00220005221"/>
    <property type="gene ID" value="ENSOARG00220004546"/>
</dbReference>
<dbReference type="Ensembl" id="ENSOART00225066906">
    <property type="protein sequence ID" value="ENSOARP00225033879"/>
    <property type="gene ID" value="ENSOARG00225040378"/>
</dbReference>
<dbReference type="Ensembl" id="ENSOART00260000941">
    <property type="protein sequence ID" value="ENSOARP00260000543"/>
    <property type="gene ID" value="ENSOARG00260000568"/>
</dbReference>
<dbReference type="GeneID" id="443255"/>
<dbReference type="KEGG" id="oas:443255"/>
<dbReference type="CTD" id="1827"/>
<dbReference type="eggNOG" id="KOG4019">
    <property type="taxonomic scope" value="Eukaryota"/>
</dbReference>
<dbReference type="HOGENOM" id="CLU_076190_2_0_1"/>
<dbReference type="OMA" id="RIMQTRC"/>
<dbReference type="OrthoDB" id="17212at2759"/>
<dbReference type="Proteomes" id="UP000002356">
    <property type="component" value="Chromosome 1"/>
</dbReference>
<dbReference type="Bgee" id="ENSOARG00000012673">
    <property type="expression patterns" value="Expressed in mitral valve and 54 other cell types or tissues"/>
</dbReference>
<dbReference type="GO" id="GO:0005737">
    <property type="term" value="C:cytoplasm"/>
    <property type="evidence" value="ECO:0007669"/>
    <property type="project" value="TreeGrafter"/>
</dbReference>
<dbReference type="GO" id="GO:0005634">
    <property type="term" value="C:nucleus"/>
    <property type="evidence" value="ECO:0007669"/>
    <property type="project" value="TreeGrafter"/>
</dbReference>
<dbReference type="GO" id="GO:0008597">
    <property type="term" value="F:calcium-dependent protein serine/threonine phosphatase regulator activity"/>
    <property type="evidence" value="ECO:0007669"/>
    <property type="project" value="TreeGrafter"/>
</dbReference>
<dbReference type="GO" id="GO:0003676">
    <property type="term" value="F:nucleic acid binding"/>
    <property type="evidence" value="ECO:0007669"/>
    <property type="project" value="InterPro"/>
</dbReference>
<dbReference type="GO" id="GO:0019722">
    <property type="term" value="P:calcium-mediated signaling"/>
    <property type="evidence" value="ECO:0007669"/>
    <property type="project" value="InterPro"/>
</dbReference>
<dbReference type="GO" id="GO:0070885">
    <property type="term" value="P:negative regulation of calcineurin-NFAT signaling cascade"/>
    <property type="evidence" value="ECO:0000250"/>
    <property type="project" value="UniProtKB"/>
</dbReference>
<dbReference type="CDD" id="cd12708">
    <property type="entry name" value="RRM_RCAN1"/>
    <property type="match status" value="1"/>
</dbReference>
<dbReference type="FunFam" id="3.30.70.330:FF:000221">
    <property type="entry name" value="calcipressin-1 isoform X1"/>
    <property type="match status" value="1"/>
</dbReference>
<dbReference type="Gene3D" id="3.30.70.330">
    <property type="match status" value="1"/>
</dbReference>
<dbReference type="InterPro" id="IPR006931">
    <property type="entry name" value="Calcipressin"/>
</dbReference>
<dbReference type="InterPro" id="IPR012677">
    <property type="entry name" value="Nucleotide-bd_a/b_plait_sf"/>
</dbReference>
<dbReference type="InterPro" id="IPR035979">
    <property type="entry name" value="RBD_domain_sf"/>
</dbReference>
<dbReference type="InterPro" id="IPR034906">
    <property type="entry name" value="RCAN1_RRM"/>
</dbReference>
<dbReference type="PANTHER" id="PTHR10300">
    <property type="entry name" value="CALCIPRESSIN"/>
    <property type="match status" value="1"/>
</dbReference>
<dbReference type="PANTHER" id="PTHR10300:SF4">
    <property type="entry name" value="CALCIPRESSIN-1"/>
    <property type="match status" value="1"/>
</dbReference>
<dbReference type="Pfam" id="PF04847">
    <property type="entry name" value="Calcipressin"/>
    <property type="match status" value="1"/>
</dbReference>
<dbReference type="SUPFAM" id="SSF54928">
    <property type="entry name" value="RNA-binding domain, RBD"/>
    <property type="match status" value="1"/>
</dbReference>
<organism>
    <name type="scientific">Ovis aries</name>
    <name type="common">Sheep</name>
    <dbReference type="NCBI Taxonomy" id="9940"/>
    <lineage>
        <taxon>Eukaryota</taxon>
        <taxon>Metazoa</taxon>
        <taxon>Chordata</taxon>
        <taxon>Craniata</taxon>
        <taxon>Vertebrata</taxon>
        <taxon>Euteleostomi</taxon>
        <taxon>Mammalia</taxon>
        <taxon>Eutheria</taxon>
        <taxon>Laurasiatheria</taxon>
        <taxon>Artiodactyla</taxon>
        <taxon>Ruminantia</taxon>
        <taxon>Pecora</taxon>
        <taxon>Bovidae</taxon>
        <taxon>Caprinae</taxon>
        <taxon>Ovis</taxon>
    </lineage>
</organism>
<reference key="1">
    <citation type="journal article" date="2003" name="J. Endocrinol.">
        <title>Characterization of two labor-induced genes, DSCR1 and TCTE1L, in the pregnant ovine myometrium.</title>
        <authorList>
            <person name="Wu W.X."/>
            <person name="Ma X.H."/>
            <person name="Zhang Q."/>
            <person name="Chakrabarty K."/>
            <person name="Nathanielsz P.W."/>
        </authorList>
    </citation>
    <scope>NUCLEOTIDE SEQUENCE [MRNA]</scope>
    <source>
        <tissue>Myometrium</tissue>
    </source>
</reference>
<comment type="function">
    <text evidence="2">Inhibits calcineurin-dependent transcriptional responses by binding to the catalytic domain of calcineurin A. Could play a role during central nervous system development.</text>
</comment>
<comment type="subunit">
    <text evidence="1 2">Interacts with RAF1, PPP3R1 and PPP3CA.</text>
</comment>
<comment type="PTM">
    <text evidence="1">Phosphorylation increases its ability to inhibit calcineurin and decreases protein half-life.</text>
</comment>
<comment type="similarity">
    <text evidence="4">Belongs to the RCAN family.</text>
</comment>
<gene>
    <name type="primary">RCAN1</name>
    <name type="synonym">DSCR1</name>
</gene>
<keyword id="KW-0597">Phosphoprotein</keyword>
<keyword id="KW-1185">Reference proteome</keyword>
<feature type="chain" id="PRO_0000295268" description="Calcipressin-1">
    <location>
        <begin position="1"/>
        <end position="197"/>
    </location>
</feature>
<feature type="region of interest" description="Disordered" evidence="3">
    <location>
        <begin position="163"/>
        <end position="197"/>
    </location>
</feature>
<feature type="compositionally biased region" description="Acidic residues" evidence="3">
    <location>
        <begin position="163"/>
        <end position="173"/>
    </location>
</feature>
<feature type="modified residue" description="Phosphoserine" evidence="1">
    <location>
        <position position="108"/>
    </location>
</feature>
<feature type="modified residue" description="Phosphoserine" evidence="1">
    <location>
        <position position="112"/>
    </location>
</feature>
<feature type="modified residue" description="Phosphoserine" evidence="2">
    <location>
        <position position="163"/>
    </location>
</feature>
<name>RCAN1_SHEEP</name>